<evidence type="ECO:0000250" key="1"/>
<evidence type="ECO:0000255" key="2"/>
<evidence type="ECO:0000255" key="3">
    <source>
        <dbReference type="PROSITE-ProRule" id="PRU00521"/>
    </source>
</evidence>
<evidence type="ECO:0000256" key="4">
    <source>
        <dbReference type="SAM" id="MobiDB-lite"/>
    </source>
</evidence>
<evidence type="ECO:0000269" key="5">
    <source>
    </source>
</evidence>
<evidence type="ECO:0000269" key="6">
    <source>
    </source>
</evidence>
<organism>
    <name type="scientific">Melopsittacus undulatus</name>
    <name type="common">Budgerigar</name>
    <name type="synonym">Psittacus undulatus</name>
    <dbReference type="NCBI Taxonomy" id="13146"/>
    <lineage>
        <taxon>Eukaryota</taxon>
        <taxon>Metazoa</taxon>
        <taxon>Chordata</taxon>
        <taxon>Craniata</taxon>
        <taxon>Vertebrata</taxon>
        <taxon>Euteleostomi</taxon>
        <taxon>Archelosauria</taxon>
        <taxon>Archosauria</taxon>
        <taxon>Dinosauria</taxon>
        <taxon>Saurischia</taxon>
        <taxon>Theropoda</taxon>
        <taxon>Coelurosauria</taxon>
        <taxon>Aves</taxon>
        <taxon>Neognathae</taxon>
        <taxon>Neoaves</taxon>
        <taxon>Telluraves</taxon>
        <taxon>Australaves</taxon>
        <taxon>Psittaciformes</taxon>
        <taxon>Psittaculidae</taxon>
        <taxon>Melopsittacus</taxon>
    </lineage>
</organism>
<name>OPSUV_MELUD</name>
<comment type="function">
    <text>Visual pigments are the light-absorbing molecules that mediate vision. They consist of an apoprotein, opsin, covalently linked to cis-retinal.</text>
</comment>
<comment type="biophysicochemical properties">
    <absorption>
        <max evidence="5 6">371 nm</max>
    </absorption>
</comment>
<comment type="subcellular location">
    <subcellularLocation>
        <location>Membrane</location>
        <topology>Multi-pass membrane protein</topology>
    </subcellularLocation>
</comment>
<comment type="tissue specificity">
    <text evidence="5">Cone photoreceptor cells.</text>
</comment>
<comment type="PTM">
    <text evidence="1">Phosphorylated on some or all of the serine and threonine residues present in the C-terminal region.</text>
</comment>
<comment type="similarity">
    <text evidence="3">Belongs to the G-protein coupled receptor 1 family. Opsin subfamily.</text>
</comment>
<protein>
    <recommendedName>
        <fullName>Ultraviolet-sensitive opsin</fullName>
    </recommendedName>
    <alternativeName>
        <fullName>Ultraviolet cone photoreceptor pigment</fullName>
    </alternativeName>
</protein>
<keyword id="KW-0157">Chromophore</keyword>
<keyword id="KW-1015">Disulfide bond</keyword>
<keyword id="KW-0297">G-protein coupled receptor</keyword>
<keyword id="KW-0325">Glycoprotein</keyword>
<keyword id="KW-0449">Lipoprotein</keyword>
<keyword id="KW-0472">Membrane</keyword>
<keyword id="KW-0564">Palmitate</keyword>
<keyword id="KW-0597">Phosphoprotein</keyword>
<keyword id="KW-0600">Photoreceptor protein</keyword>
<keyword id="KW-0675">Receptor</keyword>
<keyword id="KW-1185">Reference proteome</keyword>
<keyword id="KW-0681">Retinal protein</keyword>
<keyword id="KW-0716">Sensory transduction</keyword>
<keyword id="KW-0807">Transducer</keyword>
<keyword id="KW-0812">Transmembrane</keyword>
<keyword id="KW-1133">Transmembrane helix</keyword>
<keyword id="KW-0844">Vision</keyword>
<feature type="chain" id="PRO_0000197769" description="Ultraviolet-sensitive opsin">
    <location>
        <begin position="1"/>
        <end position="347"/>
    </location>
</feature>
<feature type="topological domain" description="Extracellular" evidence="1">
    <location>
        <begin position="1"/>
        <end position="37"/>
    </location>
</feature>
<feature type="transmembrane region" description="Helical; Name=1" evidence="2">
    <location>
        <begin position="38"/>
        <end position="58"/>
    </location>
</feature>
<feature type="topological domain" description="Cytoplasmic" evidence="1">
    <location>
        <begin position="59"/>
        <end position="69"/>
    </location>
</feature>
<feature type="transmembrane region" description="Helical; Name=2" evidence="2">
    <location>
        <begin position="70"/>
        <end position="90"/>
    </location>
</feature>
<feature type="topological domain" description="Extracellular" evidence="1">
    <location>
        <begin position="91"/>
        <end position="106"/>
    </location>
</feature>
<feature type="transmembrane region" description="Helical; Name=3" evidence="2">
    <location>
        <begin position="107"/>
        <end position="127"/>
    </location>
</feature>
<feature type="topological domain" description="Cytoplasmic" evidence="1">
    <location>
        <begin position="128"/>
        <end position="147"/>
    </location>
</feature>
<feature type="transmembrane region" description="Helical; Name=4" evidence="2">
    <location>
        <begin position="148"/>
        <end position="168"/>
    </location>
</feature>
<feature type="topological domain" description="Extracellular" evidence="1">
    <location>
        <begin position="169"/>
        <end position="197"/>
    </location>
</feature>
<feature type="transmembrane region" description="Helical; Name=5" evidence="2">
    <location>
        <begin position="198"/>
        <end position="218"/>
    </location>
</feature>
<feature type="topological domain" description="Cytoplasmic" evidence="1">
    <location>
        <begin position="219"/>
        <end position="247"/>
    </location>
</feature>
<feature type="transmembrane region" description="Helical; Name=6" evidence="2">
    <location>
        <begin position="248"/>
        <end position="268"/>
    </location>
</feature>
<feature type="topological domain" description="Extracellular" evidence="1">
    <location>
        <begin position="269"/>
        <end position="282"/>
    </location>
</feature>
<feature type="transmembrane region" description="Helical; Name=7" evidence="2">
    <location>
        <begin position="283"/>
        <end position="303"/>
    </location>
</feature>
<feature type="topological domain" description="Cytoplasmic" evidence="1">
    <location>
        <begin position="304"/>
        <end position="347"/>
    </location>
</feature>
<feature type="region of interest" description="Disordered" evidence="4">
    <location>
        <begin position="324"/>
        <end position="347"/>
    </location>
</feature>
<feature type="compositionally biased region" description="Low complexity" evidence="4">
    <location>
        <begin position="328"/>
        <end position="347"/>
    </location>
</feature>
<feature type="modified residue" description="N6-(retinylidene)lysine" evidence="1">
    <location>
        <position position="291"/>
    </location>
</feature>
<feature type="lipid moiety-binding region" description="S-palmitoyl cysteine" evidence="2">
    <location>
        <position position="317"/>
    </location>
</feature>
<feature type="glycosylation site" description="N-linked (GlcNAc...) asparagine" evidence="2">
    <location>
        <position position="12"/>
    </location>
</feature>
<feature type="disulfide bond" evidence="3">
    <location>
        <begin position="105"/>
        <end position="182"/>
    </location>
</feature>
<reference key="1">
    <citation type="journal article" date="1998" name="Biochem. J.">
        <title>The molecular basis for UV vision in birds: spectral characteristics, cDNA sequence and retinal localization of the UV-sensitive visual pigment of the budgerigar (Melopsittacus undulatus).</title>
        <authorList>
            <person name="Wilkie S.E."/>
            <person name="Vissers P.M.A.M."/>
            <person name="Das D."/>
            <person name="DeGrip W.J."/>
            <person name="Bowmaker J.K."/>
            <person name="Hunt D.M."/>
        </authorList>
    </citation>
    <scope>NUCLEOTIDE SEQUENCE [MRNA]</scope>
    <scope>TISSUE SPECIFICITY</scope>
    <scope>BIOPHYSICOCHEMICAL PROPERTIES</scope>
    <source>
        <tissue>Retina</tissue>
    </source>
</reference>
<reference key="2">
    <citation type="journal article" date="1997" name="Vision Res.">
        <title>Visual pigments and oil droplets from six classes of photoreceptor in the retinas of birds.</title>
        <authorList>
            <person name="Bowmaker J.K."/>
            <person name="Heath L.A."/>
            <person name="Wilkie S.E."/>
            <person name="Hunt D.M."/>
        </authorList>
    </citation>
    <scope>BIOPHYSICOCHEMICAL PROPERTIES</scope>
    <source>
        <tissue>Retina</tissue>
    </source>
</reference>
<proteinExistence type="evidence at protein level"/>
<dbReference type="EMBL" id="Y11787">
    <property type="protein sequence ID" value="CAA72483.1"/>
    <property type="molecule type" value="mRNA"/>
</dbReference>
<dbReference type="RefSeq" id="NP_001298010.1">
    <property type="nucleotide sequence ID" value="NM_001311081.1"/>
</dbReference>
<dbReference type="SMR" id="O57605"/>
<dbReference type="Ensembl" id="ENSMUNT00000024001.2">
    <property type="protein sequence ID" value="ENSMUNP00000030364.1"/>
    <property type="gene ID" value="ENSMUNG00000015907.2"/>
</dbReference>
<dbReference type="GeneID" id="101869469"/>
<dbReference type="CTD" id="611"/>
<dbReference type="OrthoDB" id="8545112at2759"/>
<dbReference type="Proteomes" id="UP000694405">
    <property type="component" value="Chromosome 5"/>
</dbReference>
<dbReference type="GO" id="GO:0016020">
    <property type="term" value="C:membrane"/>
    <property type="evidence" value="ECO:0007669"/>
    <property type="project" value="UniProtKB-SubCell"/>
</dbReference>
<dbReference type="GO" id="GO:0004930">
    <property type="term" value="F:G protein-coupled receptor activity"/>
    <property type="evidence" value="ECO:0007669"/>
    <property type="project" value="UniProtKB-KW"/>
</dbReference>
<dbReference type="GO" id="GO:0009881">
    <property type="term" value="F:photoreceptor activity"/>
    <property type="evidence" value="ECO:0007669"/>
    <property type="project" value="UniProtKB-KW"/>
</dbReference>
<dbReference type="GO" id="GO:0016038">
    <property type="term" value="P:absorption of visible light"/>
    <property type="evidence" value="ECO:0000250"/>
    <property type="project" value="AgBase"/>
</dbReference>
<dbReference type="GO" id="GO:0007602">
    <property type="term" value="P:phototransduction"/>
    <property type="evidence" value="ECO:0007669"/>
    <property type="project" value="UniProtKB-KW"/>
</dbReference>
<dbReference type="GO" id="GO:0007601">
    <property type="term" value="P:visual perception"/>
    <property type="evidence" value="ECO:0007669"/>
    <property type="project" value="UniProtKB-KW"/>
</dbReference>
<dbReference type="CDD" id="cd15076">
    <property type="entry name" value="7tmA_SWS1_opsin"/>
    <property type="match status" value="1"/>
</dbReference>
<dbReference type="FunFam" id="1.20.1070.10:FF:000018">
    <property type="entry name" value="Rhodopsin"/>
    <property type="match status" value="1"/>
</dbReference>
<dbReference type="Gene3D" id="1.20.1070.10">
    <property type="entry name" value="Rhodopsin 7-helix transmembrane proteins"/>
    <property type="match status" value="1"/>
</dbReference>
<dbReference type="InterPro" id="IPR050125">
    <property type="entry name" value="GPCR_opsins"/>
</dbReference>
<dbReference type="InterPro" id="IPR000276">
    <property type="entry name" value="GPCR_Rhodpsn"/>
</dbReference>
<dbReference type="InterPro" id="IPR017452">
    <property type="entry name" value="GPCR_Rhodpsn_7TM"/>
</dbReference>
<dbReference type="InterPro" id="IPR001760">
    <property type="entry name" value="Opsin"/>
</dbReference>
<dbReference type="InterPro" id="IPR001521">
    <property type="entry name" value="Opsin_blue"/>
</dbReference>
<dbReference type="InterPro" id="IPR027430">
    <property type="entry name" value="Retinal_BS"/>
</dbReference>
<dbReference type="PANTHER" id="PTHR24240">
    <property type="entry name" value="OPSIN"/>
    <property type="match status" value="1"/>
</dbReference>
<dbReference type="Pfam" id="PF00001">
    <property type="entry name" value="7tm_1"/>
    <property type="match status" value="1"/>
</dbReference>
<dbReference type="PRINTS" id="PR00237">
    <property type="entry name" value="GPCRRHODOPSN"/>
</dbReference>
<dbReference type="PRINTS" id="PR00238">
    <property type="entry name" value="OPSIN"/>
</dbReference>
<dbReference type="PRINTS" id="PR00574">
    <property type="entry name" value="OPSINBLUE"/>
</dbReference>
<dbReference type="SUPFAM" id="SSF81321">
    <property type="entry name" value="Family A G protein-coupled receptor-like"/>
    <property type="match status" value="1"/>
</dbReference>
<dbReference type="PROSITE" id="PS00237">
    <property type="entry name" value="G_PROTEIN_RECEP_F1_1"/>
    <property type="match status" value="1"/>
</dbReference>
<dbReference type="PROSITE" id="PS50262">
    <property type="entry name" value="G_PROTEIN_RECEP_F1_2"/>
    <property type="match status" value="1"/>
</dbReference>
<dbReference type="PROSITE" id="PS00238">
    <property type="entry name" value="OPSIN"/>
    <property type="match status" value="1"/>
</dbReference>
<sequence>MSGEEEFYLFKNGSIGGPWDGPQYHIAPPWAFYLQTAFMGFVFMVGTPLNAIVLVVTIKYKKLRQPLNYILVNISFCGFLACIICIFTVFVSSSQGYFVFGKHVCAFEGFMGATAGLVTGWSLAFLAFERYIVICKPLGNFRFTAKHALVVVVATWVIGIGVAIPPFFGWSRYVPEGLQCSCGPDWYTVGTKYRSEYYTWFLFIFCFIVPLSLIIFSYSQLLSALRAVAAQQQESATTQKAEREVSRMVVVMVGSFCVCYVPYAALAMYMVNNREHGIDLRLVTIPAFFSKSSCVYNPIIYCFMNKQFRGCIMEMVCGKPMTDDSDMSSSAQRTEVSSVSSSQVSPS</sequence>
<accession>O57605</accession>